<reference key="1">
    <citation type="journal article" date="2008" name="PLoS ONE">
        <title>Genome sequence of the saprophyte Leptospira biflexa provides insights into the evolution of Leptospira and the pathogenesis of leptospirosis.</title>
        <authorList>
            <person name="Picardeau M."/>
            <person name="Bulach D.M."/>
            <person name="Bouchier C."/>
            <person name="Zuerner R.L."/>
            <person name="Zidane N."/>
            <person name="Wilson P.J."/>
            <person name="Creno S."/>
            <person name="Kuczek E.S."/>
            <person name="Bommezzadri S."/>
            <person name="Davis J.C."/>
            <person name="McGrath A."/>
            <person name="Johnson M.J."/>
            <person name="Boursaux-Eude C."/>
            <person name="Seemann T."/>
            <person name="Rouy Z."/>
            <person name="Coppel R.L."/>
            <person name="Rood J.I."/>
            <person name="Lajus A."/>
            <person name="Davies J.K."/>
            <person name="Medigue C."/>
            <person name="Adler B."/>
        </authorList>
    </citation>
    <scope>NUCLEOTIDE SEQUENCE [LARGE SCALE GENOMIC DNA]</scope>
    <source>
        <strain>Patoc 1 / Ames</strain>
    </source>
</reference>
<organism>
    <name type="scientific">Leptospira biflexa serovar Patoc (strain Patoc 1 / Ames)</name>
    <dbReference type="NCBI Taxonomy" id="355278"/>
    <lineage>
        <taxon>Bacteria</taxon>
        <taxon>Pseudomonadati</taxon>
        <taxon>Spirochaetota</taxon>
        <taxon>Spirochaetia</taxon>
        <taxon>Leptospirales</taxon>
        <taxon>Leptospiraceae</taxon>
        <taxon>Leptospira</taxon>
    </lineage>
</organism>
<sequence>MVMYEKTAEHFGQKFKDLPEGHLLVNLGPSHPATHGILQNVIQIDGERVVDTESVIGYVHRCFEKLGERYDYNQFLVCTDRMNYVSTPLNNIGWILTVEKMMQIQVPDRVTYVRMIISELSRIMDHIICNGIMGVDLGAFSGLLHLFHHRENIYQILEKLTGARLTTTFCRVGGMERDIYPEFQTEIKLILKGLKPALDEFEELLIRNKIFNERTKGIGGISADRAIAYGFSGPNLRAAGVPWDVRKDDPYMFYDKVNFDIPVGEDGSALDRTLVRMEEMRQSMKIIEQLIDGIPEGPYHADVPHSFLPPKDRVYHNMEELIYHFKIIMHGVKVPPGEYYHATEAANGELGFYVVSEGDKSPWRVHVRRPCFWYYQAFPEMVKGGLLADTIATMSSLNVIAGELDC</sequence>
<gene>
    <name evidence="1" type="primary">nuoD</name>
    <name type="ordered locus">LBF_1245</name>
</gene>
<proteinExistence type="inferred from homology"/>
<protein>
    <recommendedName>
        <fullName evidence="1">NADH-quinone oxidoreductase subunit D</fullName>
        <ecNumber evidence="1">7.1.1.-</ecNumber>
    </recommendedName>
    <alternativeName>
        <fullName evidence="1">NADH dehydrogenase I subunit D</fullName>
    </alternativeName>
    <alternativeName>
        <fullName evidence="1">NDH-1 subunit D</fullName>
    </alternativeName>
</protein>
<keyword id="KW-0997">Cell inner membrane</keyword>
<keyword id="KW-1003">Cell membrane</keyword>
<keyword id="KW-0472">Membrane</keyword>
<keyword id="KW-0520">NAD</keyword>
<keyword id="KW-0874">Quinone</keyword>
<keyword id="KW-1278">Translocase</keyword>
<keyword id="KW-0813">Transport</keyword>
<keyword id="KW-0830">Ubiquinone</keyword>
<comment type="function">
    <text evidence="1">NDH-1 shuttles electrons from NADH, via FMN and iron-sulfur (Fe-S) centers, to quinones in the respiratory chain. The immediate electron acceptor for the enzyme in this species is believed to be ubiquinone. Couples the redox reaction to proton translocation (for every two electrons transferred, four hydrogen ions are translocated across the cytoplasmic membrane), and thus conserves the redox energy in a proton gradient.</text>
</comment>
<comment type="catalytic activity">
    <reaction evidence="1">
        <text>a quinone + NADH + 5 H(+)(in) = a quinol + NAD(+) + 4 H(+)(out)</text>
        <dbReference type="Rhea" id="RHEA:57888"/>
        <dbReference type="ChEBI" id="CHEBI:15378"/>
        <dbReference type="ChEBI" id="CHEBI:24646"/>
        <dbReference type="ChEBI" id="CHEBI:57540"/>
        <dbReference type="ChEBI" id="CHEBI:57945"/>
        <dbReference type="ChEBI" id="CHEBI:132124"/>
    </reaction>
</comment>
<comment type="subunit">
    <text evidence="1">NDH-1 is composed of 14 different subunits. Subunits NuoB, C, D, E, F, and G constitute the peripheral sector of the complex.</text>
</comment>
<comment type="subcellular location">
    <subcellularLocation>
        <location evidence="1">Cell inner membrane</location>
        <topology evidence="1">Peripheral membrane protein</topology>
        <orientation evidence="1">Cytoplasmic side</orientation>
    </subcellularLocation>
</comment>
<comment type="similarity">
    <text evidence="1">Belongs to the complex I 49 kDa subunit family.</text>
</comment>
<dbReference type="EC" id="7.1.1.-" evidence="1"/>
<dbReference type="EMBL" id="CP000777">
    <property type="protein sequence ID" value="ABZ93767.1"/>
    <property type="molecule type" value="Genomic_DNA"/>
</dbReference>
<dbReference type="RefSeq" id="WP_012388290.1">
    <property type="nucleotide sequence ID" value="NC_010842.1"/>
</dbReference>
<dbReference type="SMR" id="B0SFT7"/>
<dbReference type="KEGG" id="lbf:LBF_1245"/>
<dbReference type="HOGENOM" id="CLU_015134_1_2_12"/>
<dbReference type="GO" id="GO:0005886">
    <property type="term" value="C:plasma membrane"/>
    <property type="evidence" value="ECO:0007669"/>
    <property type="project" value="UniProtKB-SubCell"/>
</dbReference>
<dbReference type="GO" id="GO:0051287">
    <property type="term" value="F:NAD binding"/>
    <property type="evidence" value="ECO:0007669"/>
    <property type="project" value="InterPro"/>
</dbReference>
<dbReference type="GO" id="GO:0050136">
    <property type="term" value="F:NADH:ubiquinone reductase (non-electrogenic) activity"/>
    <property type="evidence" value="ECO:0007669"/>
    <property type="project" value="UniProtKB-UniRule"/>
</dbReference>
<dbReference type="GO" id="GO:0048038">
    <property type="term" value="F:quinone binding"/>
    <property type="evidence" value="ECO:0007669"/>
    <property type="project" value="UniProtKB-KW"/>
</dbReference>
<dbReference type="Gene3D" id="1.10.645.10">
    <property type="entry name" value="Cytochrome-c3 Hydrogenase, chain B"/>
    <property type="match status" value="1"/>
</dbReference>
<dbReference type="HAMAP" id="MF_01358">
    <property type="entry name" value="NDH1_NuoD"/>
    <property type="match status" value="1"/>
</dbReference>
<dbReference type="InterPro" id="IPR001135">
    <property type="entry name" value="NADH_Q_OxRdtase_suD"/>
</dbReference>
<dbReference type="InterPro" id="IPR022885">
    <property type="entry name" value="NDH1_su_D/H"/>
</dbReference>
<dbReference type="InterPro" id="IPR029014">
    <property type="entry name" value="NiFe-Hase_large"/>
</dbReference>
<dbReference type="NCBIfam" id="NF004739">
    <property type="entry name" value="PRK06075.1"/>
    <property type="match status" value="1"/>
</dbReference>
<dbReference type="PANTHER" id="PTHR11993:SF10">
    <property type="entry name" value="NADH DEHYDROGENASE [UBIQUINONE] IRON-SULFUR PROTEIN 2, MITOCHONDRIAL"/>
    <property type="match status" value="1"/>
</dbReference>
<dbReference type="PANTHER" id="PTHR11993">
    <property type="entry name" value="NADH-UBIQUINONE OXIDOREDUCTASE 49 KDA SUBUNIT"/>
    <property type="match status" value="1"/>
</dbReference>
<dbReference type="Pfam" id="PF00346">
    <property type="entry name" value="Complex1_49kDa"/>
    <property type="match status" value="1"/>
</dbReference>
<dbReference type="SUPFAM" id="SSF56762">
    <property type="entry name" value="HydB/Nqo4-like"/>
    <property type="match status" value="1"/>
</dbReference>
<accession>B0SFT7</accession>
<name>NUOD_LEPBA</name>
<feature type="chain" id="PRO_0000357834" description="NADH-quinone oxidoreductase subunit D">
    <location>
        <begin position="1"/>
        <end position="406"/>
    </location>
</feature>
<evidence type="ECO:0000255" key="1">
    <source>
        <dbReference type="HAMAP-Rule" id="MF_01358"/>
    </source>
</evidence>